<evidence type="ECO:0000255" key="1">
    <source>
        <dbReference type="HAMAP-Rule" id="MF_00605"/>
    </source>
</evidence>
<dbReference type="EC" id="2.1.1.228" evidence="1"/>
<dbReference type="EMBL" id="CP000850">
    <property type="protein sequence ID" value="ABV97105.1"/>
    <property type="molecule type" value="Genomic_DNA"/>
</dbReference>
<dbReference type="SMR" id="A8M680"/>
<dbReference type="STRING" id="391037.Sare_1197"/>
<dbReference type="KEGG" id="saq:Sare_1197"/>
<dbReference type="PATRIC" id="fig|391037.6.peg.1216"/>
<dbReference type="eggNOG" id="COG0336">
    <property type="taxonomic scope" value="Bacteria"/>
</dbReference>
<dbReference type="HOGENOM" id="CLU_047363_0_0_11"/>
<dbReference type="OrthoDB" id="9807416at2"/>
<dbReference type="GO" id="GO:0005829">
    <property type="term" value="C:cytosol"/>
    <property type="evidence" value="ECO:0007669"/>
    <property type="project" value="TreeGrafter"/>
</dbReference>
<dbReference type="GO" id="GO:0052906">
    <property type="term" value="F:tRNA (guanine(37)-N1)-methyltransferase activity"/>
    <property type="evidence" value="ECO:0007669"/>
    <property type="project" value="UniProtKB-UniRule"/>
</dbReference>
<dbReference type="GO" id="GO:0002939">
    <property type="term" value="P:tRNA N1-guanine methylation"/>
    <property type="evidence" value="ECO:0007669"/>
    <property type="project" value="TreeGrafter"/>
</dbReference>
<dbReference type="CDD" id="cd18080">
    <property type="entry name" value="TrmD-like"/>
    <property type="match status" value="1"/>
</dbReference>
<dbReference type="FunFam" id="1.10.1270.20:FF:000002">
    <property type="entry name" value="tRNA (guanine-N(1)-)-methyltransferase"/>
    <property type="match status" value="1"/>
</dbReference>
<dbReference type="FunFam" id="3.40.1280.10:FF:000001">
    <property type="entry name" value="tRNA (guanine-N(1)-)-methyltransferase"/>
    <property type="match status" value="1"/>
</dbReference>
<dbReference type="Gene3D" id="3.40.1280.10">
    <property type="match status" value="1"/>
</dbReference>
<dbReference type="Gene3D" id="1.10.1270.20">
    <property type="entry name" value="tRNA(m1g37)methyltransferase, domain 2"/>
    <property type="match status" value="1"/>
</dbReference>
<dbReference type="HAMAP" id="MF_00605">
    <property type="entry name" value="TrmD"/>
    <property type="match status" value="1"/>
</dbReference>
<dbReference type="InterPro" id="IPR029028">
    <property type="entry name" value="Alpha/beta_knot_MTases"/>
</dbReference>
<dbReference type="InterPro" id="IPR023148">
    <property type="entry name" value="tRNA_m1G_MeTrfase_C_sf"/>
</dbReference>
<dbReference type="InterPro" id="IPR002649">
    <property type="entry name" value="tRNA_m1G_MeTrfase_TrmD"/>
</dbReference>
<dbReference type="InterPro" id="IPR029026">
    <property type="entry name" value="tRNA_m1G_MTases_N"/>
</dbReference>
<dbReference type="InterPro" id="IPR016009">
    <property type="entry name" value="tRNA_MeTrfase_TRMD/TRM10"/>
</dbReference>
<dbReference type="NCBIfam" id="NF000648">
    <property type="entry name" value="PRK00026.1"/>
    <property type="match status" value="1"/>
</dbReference>
<dbReference type="NCBIfam" id="TIGR00088">
    <property type="entry name" value="trmD"/>
    <property type="match status" value="1"/>
</dbReference>
<dbReference type="PANTHER" id="PTHR46417">
    <property type="entry name" value="TRNA (GUANINE-N(1)-)-METHYLTRANSFERASE"/>
    <property type="match status" value="1"/>
</dbReference>
<dbReference type="PANTHER" id="PTHR46417:SF1">
    <property type="entry name" value="TRNA (GUANINE-N(1)-)-METHYLTRANSFERASE"/>
    <property type="match status" value="1"/>
</dbReference>
<dbReference type="Pfam" id="PF01746">
    <property type="entry name" value="tRNA_m1G_MT"/>
    <property type="match status" value="1"/>
</dbReference>
<dbReference type="PIRSF" id="PIRSF000386">
    <property type="entry name" value="tRNA_mtase"/>
    <property type="match status" value="1"/>
</dbReference>
<dbReference type="SUPFAM" id="SSF75217">
    <property type="entry name" value="alpha/beta knot"/>
    <property type="match status" value="1"/>
</dbReference>
<sequence>MHVDVVSIFPEYFAPLDLSLIGRARASGTLRLAVHDLRAWTHDVHRTVDDTPYGGGPGMVMRPEPWGEALDALAPPGGTPPRLLVPTPAGVPFSQALAHELASESHLLFACGRYEGIDQRVLDHAASRMPVTEVSLGDYVLFGGEVAVLVILEAVTRLLPGVLGNVGSLDDESHAHGLLEAPMYTKPAAWRDREVPAVLRSGDHGKIARWRRNEALVRTVARRPDMIAALAPESLDPRDRAVLEGAGFSAPPGDVAE</sequence>
<proteinExistence type="inferred from homology"/>
<name>TRMD_SALAI</name>
<feature type="chain" id="PRO_1000082532" description="tRNA (guanine-N(1)-)-methyltransferase">
    <location>
        <begin position="1"/>
        <end position="257"/>
    </location>
</feature>
<feature type="binding site" evidence="1">
    <location>
        <position position="112"/>
    </location>
    <ligand>
        <name>S-adenosyl-L-methionine</name>
        <dbReference type="ChEBI" id="CHEBI:59789"/>
    </ligand>
</feature>
<feature type="binding site" evidence="1">
    <location>
        <begin position="136"/>
        <end position="141"/>
    </location>
    <ligand>
        <name>S-adenosyl-L-methionine</name>
        <dbReference type="ChEBI" id="CHEBI:59789"/>
    </ligand>
</feature>
<reference key="1">
    <citation type="submission" date="2007-10" db="EMBL/GenBank/DDBJ databases">
        <title>Complete sequence of Salinispora arenicola CNS-205.</title>
        <authorList>
            <consortium name="US DOE Joint Genome Institute"/>
            <person name="Copeland A."/>
            <person name="Lucas S."/>
            <person name="Lapidus A."/>
            <person name="Barry K."/>
            <person name="Glavina del Rio T."/>
            <person name="Dalin E."/>
            <person name="Tice H."/>
            <person name="Pitluck S."/>
            <person name="Foster B."/>
            <person name="Schmutz J."/>
            <person name="Larimer F."/>
            <person name="Land M."/>
            <person name="Hauser L."/>
            <person name="Kyrpides N."/>
            <person name="Ivanova N."/>
            <person name="Jensen P.R."/>
            <person name="Moore B.S."/>
            <person name="Penn K."/>
            <person name="Jenkins C."/>
            <person name="Udwary D."/>
            <person name="Xiang L."/>
            <person name="Gontang E."/>
            <person name="Richardson P."/>
        </authorList>
    </citation>
    <scope>NUCLEOTIDE SEQUENCE [LARGE SCALE GENOMIC DNA]</scope>
    <source>
        <strain>CNS-205</strain>
    </source>
</reference>
<protein>
    <recommendedName>
        <fullName evidence="1">tRNA (guanine-N(1)-)-methyltransferase</fullName>
        <ecNumber evidence="1">2.1.1.228</ecNumber>
    </recommendedName>
    <alternativeName>
        <fullName evidence="1">M1G-methyltransferase</fullName>
    </alternativeName>
    <alternativeName>
        <fullName evidence="1">tRNA [GM37] methyltransferase</fullName>
    </alternativeName>
</protein>
<gene>
    <name evidence="1" type="primary">trmD</name>
    <name type="ordered locus">Sare_1197</name>
</gene>
<organism>
    <name type="scientific">Salinispora arenicola (strain CNS-205)</name>
    <dbReference type="NCBI Taxonomy" id="391037"/>
    <lineage>
        <taxon>Bacteria</taxon>
        <taxon>Bacillati</taxon>
        <taxon>Actinomycetota</taxon>
        <taxon>Actinomycetes</taxon>
        <taxon>Micromonosporales</taxon>
        <taxon>Micromonosporaceae</taxon>
        <taxon>Salinispora</taxon>
    </lineage>
</organism>
<comment type="function">
    <text evidence="1">Specifically methylates guanosine-37 in various tRNAs.</text>
</comment>
<comment type="catalytic activity">
    <reaction evidence="1">
        <text>guanosine(37) in tRNA + S-adenosyl-L-methionine = N(1)-methylguanosine(37) in tRNA + S-adenosyl-L-homocysteine + H(+)</text>
        <dbReference type="Rhea" id="RHEA:36899"/>
        <dbReference type="Rhea" id="RHEA-COMP:10145"/>
        <dbReference type="Rhea" id="RHEA-COMP:10147"/>
        <dbReference type="ChEBI" id="CHEBI:15378"/>
        <dbReference type="ChEBI" id="CHEBI:57856"/>
        <dbReference type="ChEBI" id="CHEBI:59789"/>
        <dbReference type="ChEBI" id="CHEBI:73542"/>
        <dbReference type="ChEBI" id="CHEBI:74269"/>
        <dbReference type="EC" id="2.1.1.228"/>
    </reaction>
</comment>
<comment type="subunit">
    <text evidence="1">Homodimer.</text>
</comment>
<comment type="subcellular location">
    <subcellularLocation>
        <location evidence="1">Cytoplasm</location>
    </subcellularLocation>
</comment>
<comment type="similarity">
    <text evidence="1">Belongs to the RNA methyltransferase TrmD family.</text>
</comment>
<keyword id="KW-0963">Cytoplasm</keyword>
<keyword id="KW-0489">Methyltransferase</keyword>
<keyword id="KW-0949">S-adenosyl-L-methionine</keyword>
<keyword id="KW-0808">Transferase</keyword>
<keyword id="KW-0819">tRNA processing</keyword>
<accession>A8M680</accession>